<accession>Q206Z5</accession>
<keyword id="KW-0002">3D-structure</keyword>
<keyword id="KW-0134">Cell wall</keyword>
<keyword id="KW-0272">Extracellular matrix</keyword>
<keyword id="KW-0293">Fruiting body</keyword>
<keyword id="KW-0430">Lectin</keyword>
<keyword id="KW-0964">Secreted</keyword>
<gene>
    <name type="primary">Cgl3</name>
</gene>
<dbReference type="EMBL" id="DQ408306">
    <property type="protein sequence ID" value="ABD64675.1"/>
    <property type="molecule type" value="Genomic_DNA"/>
</dbReference>
<dbReference type="PDB" id="2R0F">
    <property type="method" value="X-ray"/>
    <property type="resolution" value="2.00 A"/>
    <property type="chains" value="A/B=1-164"/>
</dbReference>
<dbReference type="PDB" id="2R0H">
    <property type="method" value="X-ray"/>
    <property type="resolution" value="1.90 A"/>
    <property type="chains" value="A/B/C/D=1-164"/>
</dbReference>
<dbReference type="PDBsum" id="2R0F"/>
<dbReference type="PDBsum" id="2R0H"/>
<dbReference type="SMR" id="Q206Z5"/>
<dbReference type="UniLectin" id="Q206Z5"/>
<dbReference type="VEuPathDB" id="FungiDB:CC1G_00723"/>
<dbReference type="VEuPathDB" id="FungiDB:CC2G_000186"/>
<dbReference type="EvolutionaryTrace" id="Q206Z5"/>
<dbReference type="GO" id="GO:0005576">
    <property type="term" value="C:extracellular region"/>
    <property type="evidence" value="ECO:0007669"/>
    <property type="project" value="UniProtKB-KW"/>
</dbReference>
<dbReference type="GO" id="GO:0030246">
    <property type="term" value="F:carbohydrate binding"/>
    <property type="evidence" value="ECO:0007669"/>
    <property type="project" value="UniProtKB-KW"/>
</dbReference>
<dbReference type="Gene3D" id="2.60.120.200">
    <property type="match status" value="1"/>
</dbReference>
<dbReference type="InterPro" id="IPR013320">
    <property type="entry name" value="ConA-like_dom_sf"/>
</dbReference>
<dbReference type="InterPro" id="IPR001079">
    <property type="entry name" value="Galectin_CRD"/>
</dbReference>
<dbReference type="Pfam" id="PF00337">
    <property type="entry name" value="Gal-bind_lectin"/>
    <property type="match status" value="1"/>
</dbReference>
<dbReference type="SUPFAM" id="SSF49899">
    <property type="entry name" value="Concanavalin A-like lectins/glucanases"/>
    <property type="match status" value="1"/>
</dbReference>
<dbReference type="PROSITE" id="PS51304">
    <property type="entry name" value="GALECTIN"/>
    <property type="match status" value="1"/>
</dbReference>
<feature type="chain" id="PRO_0000333263" description="Galectin-3">
    <location>
        <begin position="1"/>
        <end position="164"/>
    </location>
</feature>
<feature type="domain" description="Galectin" evidence="2">
    <location>
        <begin position="9"/>
        <end position="154"/>
    </location>
</feature>
<feature type="binding site">
    <location>
        <position position="45"/>
    </location>
    <ligand>
        <name>a carbohydrate</name>
        <dbReference type="ChEBI" id="CHEBI:16646"/>
    </ligand>
</feature>
<feature type="binding site">
    <location>
        <position position="64"/>
    </location>
    <ligand>
        <name>a carbohydrate</name>
        <dbReference type="ChEBI" id="CHEBI:16646"/>
    </ligand>
</feature>
<feature type="binding site">
    <location>
        <position position="73"/>
    </location>
    <ligand>
        <name>a carbohydrate</name>
        <dbReference type="ChEBI" id="CHEBI:16646"/>
    </ligand>
</feature>
<feature type="binding site">
    <location>
        <position position="81"/>
    </location>
    <ligand>
        <name>a carbohydrate</name>
        <dbReference type="ChEBI" id="CHEBI:16646"/>
    </ligand>
</feature>
<feature type="binding site">
    <location>
        <position position="84"/>
    </location>
    <ligand>
        <name>a carbohydrate</name>
        <dbReference type="ChEBI" id="CHEBI:16646"/>
    </ligand>
</feature>
<feature type="binding site">
    <location>
        <position position="138"/>
    </location>
    <ligand>
        <name>a carbohydrate</name>
        <dbReference type="ChEBI" id="CHEBI:16646"/>
    </ligand>
</feature>
<feature type="mutagenesis site" description="Abolishes chitooligosaccharide binding; when associated with A-45." evidence="4">
    <original>I</original>
    <variation>A</variation>
    <location>
        <position position="43"/>
    </location>
</feature>
<feature type="mutagenesis site" description="Abolishes chitooligosaccharide binding; when associated with A-43." evidence="4">
    <original>N</original>
    <variation>A</variation>
    <location>
        <position position="45"/>
    </location>
</feature>
<feature type="mutagenesis site" description="Alters binding specificity, leading to lactose binding and reduced affinity for chitooligosaccharide." evidence="4">
    <original>R</original>
    <variation>A</variation>
    <location>
        <position position="81"/>
    </location>
</feature>
<feature type="mutagenesis site" description="Alters binding specificity, leading to lactose binding and loss of chitooligosaccharide binding." evidence="4">
    <original>R</original>
    <variation>W</variation>
    <location>
        <position position="81"/>
    </location>
</feature>
<feature type="mutagenesis site" description="Abolishes chitooligosaccharide binding." evidence="4">
    <original>N</original>
    <variation>A</variation>
    <location>
        <position position="138"/>
    </location>
</feature>
<feature type="strand" evidence="6">
    <location>
        <begin position="2"/>
        <end position="6"/>
    </location>
</feature>
<feature type="strand" evidence="6">
    <location>
        <begin position="9"/>
        <end position="12"/>
    </location>
</feature>
<feature type="strand" evidence="6">
    <location>
        <begin position="22"/>
        <end position="26"/>
    </location>
</feature>
<feature type="turn" evidence="5">
    <location>
        <begin position="39"/>
        <end position="41"/>
    </location>
</feature>
<feature type="strand" evidence="6">
    <location>
        <begin position="46"/>
        <end position="52"/>
    </location>
</feature>
<feature type="strand" evidence="6">
    <location>
        <begin position="57"/>
        <end position="64"/>
    </location>
</feature>
<feature type="turn" evidence="6">
    <location>
        <begin position="65"/>
        <end position="68"/>
    </location>
</feature>
<feature type="strand" evidence="6">
    <location>
        <begin position="69"/>
        <end position="75"/>
    </location>
</feature>
<feature type="strand" evidence="6">
    <location>
        <begin position="85"/>
        <end position="88"/>
    </location>
</feature>
<feature type="turn" evidence="5">
    <location>
        <begin position="90"/>
        <end position="92"/>
    </location>
</feature>
<feature type="strand" evidence="6">
    <location>
        <begin position="100"/>
        <end position="105"/>
    </location>
</feature>
<feature type="strand" evidence="6">
    <location>
        <begin position="107"/>
        <end position="114"/>
    </location>
</feature>
<feature type="strand" evidence="6">
    <location>
        <begin position="117"/>
        <end position="123"/>
    </location>
</feature>
<feature type="strand" evidence="6">
    <location>
        <begin position="130"/>
        <end position="137"/>
    </location>
</feature>
<feature type="strand" evidence="6">
    <location>
        <begin position="147"/>
        <end position="154"/>
    </location>
</feature>
<feature type="helix" evidence="6">
    <location>
        <begin position="156"/>
        <end position="159"/>
    </location>
</feature>
<comment type="function">
    <text evidence="4">Binds complex carbohydrates, such as chitooligosaccharides. Does not bind lactose. May play a role in fruiting body formation.</text>
</comment>
<comment type="subunit">
    <text evidence="1">Homotetramer. Oligomerization is required for carbohydrate binding (By similarity).</text>
</comment>
<comment type="subcellular location">
    <subcellularLocation>
        <location evidence="1">Secreted</location>
        <location evidence="1">Extracellular space</location>
        <location evidence="1">Extracellular matrix</location>
    </subcellularLocation>
    <subcellularLocation>
        <location evidence="1">Secreted</location>
        <location evidence="1">Cell wall</location>
    </subcellularLocation>
</comment>
<comment type="induction">
    <text evidence="3 4">Induced during fruiting body formation.</text>
</comment>
<proteinExistence type="evidence at protein level"/>
<sequence length="164" mass="18735">MFHILRLESTVDLSEPLKDNGIIVFQSDKLDLEPSPNLGPTGIDNTNVNLINAKGDVLLHIGIRRRENAFVFNSIPYGESRGPEERIPLEGTFGDRRDPSITIFDHPDRYQIMIDYKTVYYYKKRLEGRCEKVSYKINEGQTPPFSDVLGVTVLYFANVMPRAN</sequence>
<reference key="1">
    <citation type="journal article" date="2006" name="Eukaryot. Cell">
        <title>Targeted gene silencing in the model mushroom Coprinopsis cinerea (Coprinus cinereus) by expression of homologous hairpin RNAs.</title>
        <authorList>
            <person name="Waelti M.A."/>
            <person name="Villalba C."/>
            <person name="Buser R.M."/>
            <person name="Gruenler A."/>
            <person name="Aebi M."/>
            <person name="Kuenzler M."/>
        </authorList>
    </citation>
    <scope>NUCLEOTIDE SEQUENCE [GENOMIC DNA]</scope>
    <scope>INDUCTION</scope>
    <source>
        <strain>AmutBmut</strain>
    </source>
</reference>
<reference key="2">
    <citation type="journal article" date="2008" name="J. Mol. Biol.">
        <title>Structural basis for chitotetraose coordination by CGL3, a novel galectin-related protein from Coprinopsis cinerea.</title>
        <authorList>
            <person name="Waelti M.A."/>
            <person name="Walser P.J."/>
            <person name="Thore S."/>
            <person name="Gruenler A."/>
            <person name="Bednar M."/>
            <person name="Kuenzler M."/>
            <person name="Aebi M."/>
        </authorList>
    </citation>
    <scope>X-RAY CRYSTALLOGRAPHY (1.9 ANGSTROMS) IN COMPLEX WITH CHITOTRIOSE</scope>
    <scope>FUNCTION</scope>
    <scope>SUBUNIT</scope>
    <scope>MUTAGENESIS OF ILE-43; ASN-45; ARG-81 AND ASN-138</scope>
    <scope>INDUCTION</scope>
</reference>
<organism>
    <name type="scientific">Coprinopsis cinerea</name>
    <name type="common">Inky cap fungus</name>
    <name type="synonym">Hormographiella aspergillata</name>
    <dbReference type="NCBI Taxonomy" id="5346"/>
    <lineage>
        <taxon>Eukaryota</taxon>
        <taxon>Fungi</taxon>
        <taxon>Dikarya</taxon>
        <taxon>Basidiomycota</taxon>
        <taxon>Agaricomycotina</taxon>
        <taxon>Agaricomycetes</taxon>
        <taxon>Agaricomycetidae</taxon>
        <taxon>Agaricales</taxon>
        <taxon>Agaricineae</taxon>
        <taxon>Psathyrellaceae</taxon>
        <taxon>Coprinopsis</taxon>
    </lineage>
</organism>
<name>CGL3_COPCI</name>
<evidence type="ECO:0000250" key="1"/>
<evidence type="ECO:0000255" key="2">
    <source>
        <dbReference type="PROSITE-ProRule" id="PRU00639"/>
    </source>
</evidence>
<evidence type="ECO:0000269" key="3">
    <source>
    </source>
</evidence>
<evidence type="ECO:0000269" key="4">
    <source>
    </source>
</evidence>
<evidence type="ECO:0007829" key="5">
    <source>
        <dbReference type="PDB" id="2R0F"/>
    </source>
</evidence>
<evidence type="ECO:0007829" key="6">
    <source>
        <dbReference type="PDB" id="2R0H"/>
    </source>
</evidence>
<protein>
    <recommendedName>
        <fullName>Galectin-3</fullName>
    </recommendedName>
    <alternativeName>
        <fullName>Cgl-III</fullName>
    </alternativeName>
    <alternativeName>
        <fullName>Galectin III</fullName>
    </alternativeName>
</protein>